<evidence type="ECO:0000255" key="1">
    <source>
        <dbReference type="HAMAP-Rule" id="MF_00210"/>
    </source>
</evidence>
<evidence type="ECO:0000256" key="2">
    <source>
        <dbReference type="SAM" id="MobiDB-lite"/>
    </source>
</evidence>
<comment type="function">
    <text evidence="1">Catalyzes the transfer of the enolpyruvyl moiety of phosphoenolpyruvate (PEP) to the 5-hydroxyl of shikimate-3-phosphate (S3P) to produce enolpyruvyl shikimate-3-phosphate and inorganic phosphate.</text>
</comment>
<comment type="catalytic activity">
    <reaction evidence="1">
        <text>3-phosphoshikimate + phosphoenolpyruvate = 5-O-(1-carboxyvinyl)-3-phosphoshikimate + phosphate</text>
        <dbReference type="Rhea" id="RHEA:21256"/>
        <dbReference type="ChEBI" id="CHEBI:43474"/>
        <dbReference type="ChEBI" id="CHEBI:57701"/>
        <dbReference type="ChEBI" id="CHEBI:58702"/>
        <dbReference type="ChEBI" id="CHEBI:145989"/>
        <dbReference type="EC" id="2.5.1.19"/>
    </reaction>
    <physiologicalReaction direction="left-to-right" evidence="1">
        <dbReference type="Rhea" id="RHEA:21257"/>
    </physiologicalReaction>
</comment>
<comment type="pathway">
    <text evidence="1">Metabolic intermediate biosynthesis; chorismate biosynthesis; chorismate from D-erythrose 4-phosphate and phosphoenolpyruvate: step 6/7.</text>
</comment>
<comment type="subunit">
    <text evidence="1">Monomer.</text>
</comment>
<comment type="subcellular location">
    <subcellularLocation>
        <location evidence="1">Cytoplasm</location>
    </subcellularLocation>
</comment>
<comment type="similarity">
    <text evidence="1">Belongs to the EPSP synthase family.</text>
</comment>
<gene>
    <name evidence="1" type="primary">aroA</name>
    <name type="ordered locus">R00253</name>
    <name type="ORF">SMc00333</name>
</gene>
<protein>
    <recommendedName>
        <fullName evidence="1">3-phosphoshikimate 1-carboxyvinyltransferase</fullName>
        <ecNumber evidence="1">2.5.1.19</ecNumber>
    </recommendedName>
    <alternativeName>
        <fullName evidence="1">5-enolpyruvylshikimate-3-phosphate synthase</fullName>
        <shortName evidence="1">EPSP synthase</shortName>
        <shortName evidence="1">EPSPS</shortName>
    </alternativeName>
</protein>
<dbReference type="EC" id="2.5.1.19" evidence="1"/>
<dbReference type="EMBL" id="AL591688">
    <property type="protein sequence ID" value="CAC41690.1"/>
    <property type="molecule type" value="Genomic_DNA"/>
</dbReference>
<dbReference type="RefSeq" id="NP_384359.1">
    <property type="nucleotide sequence ID" value="NC_003047.1"/>
</dbReference>
<dbReference type="RefSeq" id="WP_010968452.1">
    <property type="nucleotide sequence ID" value="NC_003047.1"/>
</dbReference>
<dbReference type="SMR" id="Q92SV5"/>
<dbReference type="EnsemblBacteria" id="CAC41690">
    <property type="protein sequence ID" value="CAC41690"/>
    <property type="gene ID" value="SMc00333"/>
</dbReference>
<dbReference type="KEGG" id="sme:SMc00333"/>
<dbReference type="PATRIC" id="fig|266834.11.peg.1620"/>
<dbReference type="eggNOG" id="COG0128">
    <property type="taxonomic scope" value="Bacteria"/>
</dbReference>
<dbReference type="HOGENOM" id="CLU_024321_0_1_5"/>
<dbReference type="OrthoDB" id="9809920at2"/>
<dbReference type="UniPathway" id="UPA00053">
    <property type="reaction ID" value="UER00089"/>
</dbReference>
<dbReference type="Proteomes" id="UP000001976">
    <property type="component" value="Chromosome"/>
</dbReference>
<dbReference type="GO" id="GO:0005737">
    <property type="term" value="C:cytoplasm"/>
    <property type="evidence" value="ECO:0007669"/>
    <property type="project" value="UniProtKB-SubCell"/>
</dbReference>
<dbReference type="GO" id="GO:0003866">
    <property type="term" value="F:3-phosphoshikimate 1-carboxyvinyltransferase activity"/>
    <property type="evidence" value="ECO:0007669"/>
    <property type="project" value="UniProtKB-UniRule"/>
</dbReference>
<dbReference type="GO" id="GO:0008652">
    <property type="term" value="P:amino acid biosynthetic process"/>
    <property type="evidence" value="ECO:0007669"/>
    <property type="project" value="UniProtKB-KW"/>
</dbReference>
<dbReference type="GO" id="GO:0009073">
    <property type="term" value="P:aromatic amino acid family biosynthetic process"/>
    <property type="evidence" value="ECO:0007669"/>
    <property type="project" value="UniProtKB-KW"/>
</dbReference>
<dbReference type="GO" id="GO:0009423">
    <property type="term" value="P:chorismate biosynthetic process"/>
    <property type="evidence" value="ECO:0007669"/>
    <property type="project" value="UniProtKB-UniRule"/>
</dbReference>
<dbReference type="CDD" id="cd01556">
    <property type="entry name" value="EPSP_synthase"/>
    <property type="match status" value="1"/>
</dbReference>
<dbReference type="FunFam" id="3.65.10.10:FF:000006">
    <property type="entry name" value="3-phosphoshikimate 1-carboxyvinyltransferase"/>
    <property type="match status" value="1"/>
</dbReference>
<dbReference type="Gene3D" id="3.65.10.10">
    <property type="entry name" value="Enolpyruvate transferase domain"/>
    <property type="match status" value="2"/>
</dbReference>
<dbReference type="HAMAP" id="MF_00210">
    <property type="entry name" value="EPSP_synth"/>
    <property type="match status" value="1"/>
</dbReference>
<dbReference type="InterPro" id="IPR001986">
    <property type="entry name" value="Enolpyruvate_Tfrase_dom"/>
</dbReference>
<dbReference type="InterPro" id="IPR036968">
    <property type="entry name" value="Enolpyruvate_Tfrase_sf"/>
</dbReference>
<dbReference type="InterPro" id="IPR006264">
    <property type="entry name" value="EPSP_synthase"/>
</dbReference>
<dbReference type="InterPro" id="IPR023193">
    <property type="entry name" value="EPSP_synthase_CS"/>
</dbReference>
<dbReference type="InterPro" id="IPR013792">
    <property type="entry name" value="RNA3'P_cycl/enolpyr_Trfase_a/b"/>
</dbReference>
<dbReference type="NCBIfam" id="TIGR01356">
    <property type="entry name" value="aroA"/>
    <property type="match status" value="1"/>
</dbReference>
<dbReference type="PANTHER" id="PTHR21090">
    <property type="entry name" value="AROM/DEHYDROQUINATE SYNTHASE"/>
    <property type="match status" value="1"/>
</dbReference>
<dbReference type="PANTHER" id="PTHR21090:SF5">
    <property type="entry name" value="PENTAFUNCTIONAL AROM POLYPEPTIDE"/>
    <property type="match status" value="1"/>
</dbReference>
<dbReference type="Pfam" id="PF00275">
    <property type="entry name" value="EPSP_synthase"/>
    <property type="match status" value="1"/>
</dbReference>
<dbReference type="PIRSF" id="PIRSF000505">
    <property type="entry name" value="EPSPS"/>
    <property type="match status" value="1"/>
</dbReference>
<dbReference type="SUPFAM" id="SSF55205">
    <property type="entry name" value="EPT/RTPC-like"/>
    <property type="match status" value="1"/>
</dbReference>
<dbReference type="PROSITE" id="PS00104">
    <property type="entry name" value="EPSP_SYNTHASE_1"/>
    <property type="match status" value="1"/>
</dbReference>
<dbReference type="PROSITE" id="PS00885">
    <property type="entry name" value="EPSP_SYNTHASE_2"/>
    <property type="match status" value="1"/>
</dbReference>
<accession>Q92SV5</accession>
<reference key="1">
    <citation type="journal article" date="2001" name="Proc. Natl. Acad. Sci. U.S.A.">
        <title>Analysis of the chromosome sequence of the legume symbiont Sinorhizobium meliloti strain 1021.</title>
        <authorList>
            <person name="Capela D."/>
            <person name="Barloy-Hubler F."/>
            <person name="Gouzy J."/>
            <person name="Bothe G."/>
            <person name="Ampe F."/>
            <person name="Batut J."/>
            <person name="Boistard P."/>
            <person name="Becker A."/>
            <person name="Boutry M."/>
            <person name="Cadieu E."/>
            <person name="Dreano S."/>
            <person name="Gloux S."/>
            <person name="Godrie T."/>
            <person name="Goffeau A."/>
            <person name="Kahn D."/>
            <person name="Kiss E."/>
            <person name="Lelaure V."/>
            <person name="Masuy D."/>
            <person name="Pohl T."/>
            <person name="Portetelle D."/>
            <person name="Puehler A."/>
            <person name="Purnelle B."/>
            <person name="Ramsperger U."/>
            <person name="Renard C."/>
            <person name="Thebault P."/>
            <person name="Vandenbol M."/>
            <person name="Weidner S."/>
            <person name="Galibert F."/>
        </authorList>
    </citation>
    <scope>NUCLEOTIDE SEQUENCE [LARGE SCALE GENOMIC DNA]</scope>
    <source>
        <strain>1021</strain>
    </source>
</reference>
<reference key="2">
    <citation type="journal article" date="2001" name="Science">
        <title>The composite genome of the legume symbiont Sinorhizobium meliloti.</title>
        <authorList>
            <person name="Galibert F."/>
            <person name="Finan T.M."/>
            <person name="Long S.R."/>
            <person name="Puehler A."/>
            <person name="Abola P."/>
            <person name="Ampe F."/>
            <person name="Barloy-Hubler F."/>
            <person name="Barnett M.J."/>
            <person name="Becker A."/>
            <person name="Boistard P."/>
            <person name="Bothe G."/>
            <person name="Boutry M."/>
            <person name="Bowser L."/>
            <person name="Buhrmester J."/>
            <person name="Cadieu E."/>
            <person name="Capela D."/>
            <person name="Chain P."/>
            <person name="Cowie A."/>
            <person name="Davis R.W."/>
            <person name="Dreano S."/>
            <person name="Federspiel N.A."/>
            <person name="Fisher R.F."/>
            <person name="Gloux S."/>
            <person name="Godrie T."/>
            <person name="Goffeau A."/>
            <person name="Golding B."/>
            <person name="Gouzy J."/>
            <person name="Gurjal M."/>
            <person name="Hernandez-Lucas I."/>
            <person name="Hong A."/>
            <person name="Huizar L."/>
            <person name="Hyman R.W."/>
            <person name="Jones T."/>
            <person name="Kahn D."/>
            <person name="Kahn M.L."/>
            <person name="Kalman S."/>
            <person name="Keating D.H."/>
            <person name="Kiss E."/>
            <person name="Komp C."/>
            <person name="Lelaure V."/>
            <person name="Masuy D."/>
            <person name="Palm C."/>
            <person name="Peck M.C."/>
            <person name="Pohl T.M."/>
            <person name="Portetelle D."/>
            <person name="Purnelle B."/>
            <person name="Ramsperger U."/>
            <person name="Surzycki R."/>
            <person name="Thebault P."/>
            <person name="Vandenbol M."/>
            <person name="Vorhoelter F.J."/>
            <person name="Weidner S."/>
            <person name="Wells D.H."/>
            <person name="Wong K."/>
            <person name="Yeh K.-C."/>
            <person name="Batut J."/>
        </authorList>
    </citation>
    <scope>NUCLEOTIDE SEQUENCE [LARGE SCALE GENOMIC DNA]</scope>
    <source>
        <strain>1021</strain>
    </source>
</reference>
<sequence length="455" mass="47900">MSHGSNPRPATARKSSDLKGTLRIPGDKSISHRSFMFGGLAAGETRITGLLEGEDVINTGKAMQAMGARIRKEGDTWIIDGVGNGALLAPEAPLDFGNAGTGCRLTMGLVGVYDFDSTFIGDASLTKRPMGRVLDPLREMGVQVKSAEGDRLPVTLRGPKTPNPITYRVPMASAQVKSAVLLAGLNTPGITTVVEPVMTRDHTEKMLQGFGANLTVETDAEGVRTIRLEGRGKLTGQVIDVPGDPSSTAFPLVAGLIVPGSDITILNVLMNPTRTGLILTLQEMGANIEVMNKRLAGGEDVADLRVRHSELKGVTVPEDRAPSMIDEYPVLAVAAAFAEGTTVMNGLEELRVKESDRLSAVADGLKLNGVDCDEGEASLVVRGRPGGKGLGKISGGQVKTHLDHRIAMSFLVMGLASEHPVTVDDATMIATSFPEFMGLMTGLGAKIEEAENKAA</sequence>
<feature type="chain" id="PRO_0000088283" description="3-phosphoshikimate 1-carboxyvinyltransferase">
    <location>
        <begin position="1"/>
        <end position="455"/>
    </location>
</feature>
<feature type="region of interest" description="Disordered" evidence="2">
    <location>
        <begin position="1"/>
        <end position="23"/>
    </location>
</feature>
<feature type="active site" description="Proton acceptor" evidence="1">
    <location>
        <position position="326"/>
    </location>
</feature>
<feature type="binding site" evidence="1">
    <location>
        <position position="28"/>
    </location>
    <ligand>
        <name>3-phosphoshikimate</name>
        <dbReference type="ChEBI" id="CHEBI:145989"/>
    </ligand>
</feature>
<feature type="binding site" evidence="1">
    <location>
        <position position="28"/>
    </location>
    <ligand>
        <name>phosphoenolpyruvate</name>
        <dbReference type="ChEBI" id="CHEBI:58702"/>
    </ligand>
</feature>
<feature type="binding site" evidence="1">
    <location>
        <position position="29"/>
    </location>
    <ligand>
        <name>3-phosphoshikimate</name>
        <dbReference type="ChEBI" id="CHEBI:145989"/>
    </ligand>
</feature>
<feature type="binding site" evidence="1">
    <location>
        <position position="33"/>
    </location>
    <ligand>
        <name>3-phosphoshikimate</name>
        <dbReference type="ChEBI" id="CHEBI:145989"/>
    </ligand>
</feature>
<feature type="binding site" evidence="1">
    <location>
        <position position="100"/>
    </location>
    <ligand>
        <name>phosphoenolpyruvate</name>
        <dbReference type="ChEBI" id="CHEBI:58702"/>
    </ligand>
</feature>
<feature type="binding site" evidence="1">
    <location>
        <position position="128"/>
    </location>
    <ligand>
        <name>phosphoenolpyruvate</name>
        <dbReference type="ChEBI" id="CHEBI:58702"/>
    </ligand>
</feature>
<feature type="binding site" evidence="1">
    <location>
        <position position="173"/>
    </location>
    <ligand>
        <name>3-phosphoshikimate</name>
        <dbReference type="ChEBI" id="CHEBI:145989"/>
    </ligand>
</feature>
<feature type="binding site" evidence="1">
    <location>
        <position position="175"/>
    </location>
    <ligand>
        <name>3-phosphoshikimate</name>
        <dbReference type="ChEBI" id="CHEBI:145989"/>
    </ligand>
</feature>
<feature type="binding site" evidence="1">
    <location>
        <position position="175"/>
    </location>
    <ligand>
        <name>phosphoenolpyruvate</name>
        <dbReference type="ChEBI" id="CHEBI:58702"/>
    </ligand>
</feature>
<feature type="binding site" evidence="1">
    <location>
        <position position="326"/>
    </location>
    <ligand>
        <name>3-phosphoshikimate</name>
        <dbReference type="ChEBI" id="CHEBI:145989"/>
    </ligand>
</feature>
<feature type="binding site" evidence="1">
    <location>
        <position position="353"/>
    </location>
    <ligand>
        <name>3-phosphoshikimate</name>
        <dbReference type="ChEBI" id="CHEBI:145989"/>
    </ligand>
</feature>
<feature type="binding site" evidence="1">
    <location>
        <position position="357"/>
    </location>
    <ligand>
        <name>phosphoenolpyruvate</name>
        <dbReference type="ChEBI" id="CHEBI:58702"/>
    </ligand>
</feature>
<feature type="binding site" evidence="1">
    <location>
        <position position="405"/>
    </location>
    <ligand>
        <name>phosphoenolpyruvate</name>
        <dbReference type="ChEBI" id="CHEBI:58702"/>
    </ligand>
</feature>
<keyword id="KW-0028">Amino-acid biosynthesis</keyword>
<keyword id="KW-0057">Aromatic amino acid biosynthesis</keyword>
<keyword id="KW-0963">Cytoplasm</keyword>
<keyword id="KW-1185">Reference proteome</keyword>
<keyword id="KW-0808">Transferase</keyword>
<proteinExistence type="inferred from homology"/>
<name>AROA_RHIME</name>
<organism>
    <name type="scientific">Rhizobium meliloti (strain 1021)</name>
    <name type="common">Ensifer meliloti</name>
    <name type="synonym">Sinorhizobium meliloti</name>
    <dbReference type="NCBI Taxonomy" id="266834"/>
    <lineage>
        <taxon>Bacteria</taxon>
        <taxon>Pseudomonadati</taxon>
        <taxon>Pseudomonadota</taxon>
        <taxon>Alphaproteobacteria</taxon>
        <taxon>Hyphomicrobiales</taxon>
        <taxon>Rhizobiaceae</taxon>
        <taxon>Sinorhizobium/Ensifer group</taxon>
        <taxon>Sinorhizobium</taxon>
    </lineage>
</organism>